<accession>Q83TH4</accession>
<keyword id="KW-0067">ATP-binding</keyword>
<keyword id="KW-0963">Cytoplasm</keyword>
<keyword id="KW-0227">DNA damage</keyword>
<keyword id="KW-0233">DNA recombination</keyword>
<keyword id="KW-0234">DNA repair</keyword>
<keyword id="KW-0238">DNA-binding</keyword>
<keyword id="KW-0547">Nucleotide-binding</keyword>
<keyword id="KW-0742">SOS response</keyword>
<gene>
    <name evidence="1" type="primary">recA</name>
</gene>
<proteinExistence type="inferred from homology"/>
<sequence>MNDRQAALDQALKQIEKQFGKGSIMKLGEHSDQNISTISSGSLALDIALGVGGYPRGRIIEVYGPESSGKTTVALHAIAEVQAQGGTAAFIDAEHALDPAYAKNLGVNIDELLLSQPDTGEQALEIAEALVRSGAVDMLVIDSVAALVPRAEIEGEMGDAHVGLQARLMSQALRKLSGAINKSKTIAIFINQIREKVGVMFGNPEITPGGRALKFYSTVRLEVRRAEQLKQGTDVMGNKTKIKVVKNKVAPPFRIAEVDIMYGEGISREGELVDMAAEVDVINKSGSWYSYKEERIGQGRENAKQYLKEHTDIRDEISKRVREEYEIDGASKEPLEETEETLSLLDDE</sequence>
<evidence type="ECO:0000255" key="1">
    <source>
        <dbReference type="HAMAP-Rule" id="MF_00268"/>
    </source>
</evidence>
<evidence type="ECO:0000256" key="2">
    <source>
        <dbReference type="SAM" id="MobiDB-lite"/>
    </source>
</evidence>
<organism>
    <name type="scientific">Listeria seeligeri</name>
    <dbReference type="NCBI Taxonomy" id="1640"/>
    <lineage>
        <taxon>Bacteria</taxon>
        <taxon>Bacillati</taxon>
        <taxon>Bacillota</taxon>
        <taxon>Bacilli</taxon>
        <taxon>Bacillales</taxon>
        <taxon>Listeriaceae</taxon>
        <taxon>Listeria</taxon>
    </lineage>
</organism>
<name>RECA_LISSE</name>
<protein>
    <recommendedName>
        <fullName evidence="1">Protein RecA</fullName>
    </recommendedName>
    <alternativeName>
        <fullName evidence="1">Recombinase A</fullName>
    </alternativeName>
</protein>
<feature type="chain" id="PRO_0000122750" description="Protein RecA">
    <location>
        <begin position="1"/>
        <end position="348"/>
    </location>
</feature>
<feature type="region of interest" description="Disordered" evidence="2">
    <location>
        <begin position="325"/>
        <end position="348"/>
    </location>
</feature>
<feature type="compositionally biased region" description="Basic and acidic residues" evidence="2">
    <location>
        <begin position="325"/>
        <end position="335"/>
    </location>
</feature>
<feature type="compositionally biased region" description="Acidic residues" evidence="2">
    <location>
        <begin position="336"/>
        <end position="348"/>
    </location>
</feature>
<feature type="binding site" evidence="1">
    <location>
        <begin position="64"/>
        <end position="71"/>
    </location>
    <ligand>
        <name>ATP</name>
        <dbReference type="ChEBI" id="CHEBI:30616"/>
    </ligand>
</feature>
<reference key="1">
    <citation type="submission" date="2002-07" db="EMBL/GenBank/DDBJ databases">
        <title>Molecular evolution of Listeria spp. and Listeria monocytogenes.</title>
        <authorList>
            <person name="Cai S."/>
            <person name="Nielsen R."/>
            <person name="Roberts A.J."/>
            <person name="Wiedmann M."/>
        </authorList>
    </citation>
    <scope>NUCLEOTIDE SEQUENCE [GENOMIC DNA]</scope>
    <source>
        <strain>FSLn1067</strain>
        <strain>FSLn1079</strain>
    </source>
</reference>
<dbReference type="EMBL" id="AY135420">
    <property type="protein sequence ID" value="AAN15810.1"/>
    <property type="molecule type" value="Genomic_DNA"/>
</dbReference>
<dbReference type="EMBL" id="AY135421">
    <property type="protein sequence ID" value="AAN15811.1"/>
    <property type="molecule type" value="Genomic_DNA"/>
</dbReference>
<dbReference type="RefSeq" id="WP_003747615.1">
    <property type="nucleotide sequence ID" value="NZ_RBYE01000011.1"/>
</dbReference>
<dbReference type="SMR" id="Q83TH4"/>
<dbReference type="STRING" id="683837.lse_1315"/>
<dbReference type="eggNOG" id="COG0468">
    <property type="taxonomic scope" value="Bacteria"/>
</dbReference>
<dbReference type="GO" id="GO:0005829">
    <property type="term" value="C:cytosol"/>
    <property type="evidence" value="ECO:0007669"/>
    <property type="project" value="TreeGrafter"/>
</dbReference>
<dbReference type="GO" id="GO:0005524">
    <property type="term" value="F:ATP binding"/>
    <property type="evidence" value="ECO:0007669"/>
    <property type="project" value="UniProtKB-UniRule"/>
</dbReference>
<dbReference type="GO" id="GO:0016887">
    <property type="term" value="F:ATP hydrolysis activity"/>
    <property type="evidence" value="ECO:0007669"/>
    <property type="project" value="InterPro"/>
</dbReference>
<dbReference type="GO" id="GO:0140664">
    <property type="term" value="F:ATP-dependent DNA damage sensor activity"/>
    <property type="evidence" value="ECO:0007669"/>
    <property type="project" value="InterPro"/>
</dbReference>
<dbReference type="GO" id="GO:0003684">
    <property type="term" value="F:damaged DNA binding"/>
    <property type="evidence" value="ECO:0007669"/>
    <property type="project" value="UniProtKB-UniRule"/>
</dbReference>
<dbReference type="GO" id="GO:0003697">
    <property type="term" value="F:single-stranded DNA binding"/>
    <property type="evidence" value="ECO:0007669"/>
    <property type="project" value="UniProtKB-UniRule"/>
</dbReference>
<dbReference type="GO" id="GO:0006310">
    <property type="term" value="P:DNA recombination"/>
    <property type="evidence" value="ECO:0007669"/>
    <property type="project" value="UniProtKB-UniRule"/>
</dbReference>
<dbReference type="GO" id="GO:0006281">
    <property type="term" value="P:DNA repair"/>
    <property type="evidence" value="ECO:0007669"/>
    <property type="project" value="UniProtKB-UniRule"/>
</dbReference>
<dbReference type="GO" id="GO:0009432">
    <property type="term" value="P:SOS response"/>
    <property type="evidence" value="ECO:0007669"/>
    <property type="project" value="UniProtKB-UniRule"/>
</dbReference>
<dbReference type="CDD" id="cd00983">
    <property type="entry name" value="RecA"/>
    <property type="match status" value="1"/>
</dbReference>
<dbReference type="FunFam" id="3.40.50.300:FF:000087">
    <property type="entry name" value="Recombinase RecA"/>
    <property type="match status" value="1"/>
</dbReference>
<dbReference type="Gene3D" id="3.40.50.300">
    <property type="entry name" value="P-loop containing nucleotide triphosphate hydrolases"/>
    <property type="match status" value="1"/>
</dbReference>
<dbReference type="HAMAP" id="MF_00268">
    <property type="entry name" value="RecA"/>
    <property type="match status" value="1"/>
</dbReference>
<dbReference type="InterPro" id="IPR003593">
    <property type="entry name" value="AAA+_ATPase"/>
</dbReference>
<dbReference type="InterPro" id="IPR013765">
    <property type="entry name" value="DNA_recomb/repair_RecA"/>
</dbReference>
<dbReference type="InterPro" id="IPR020584">
    <property type="entry name" value="DNA_recomb/repair_RecA_CS"/>
</dbReference>
<dbReference type="InterPro" id="IPR027417">
    <property type="entry name" value="P-loop_NTPase"/>
</dbReference>
<dbReference type="InterPro" id="IPR049261">
    <property type="entry name" value="RecA-like_C"/>
</dbReference>
<dbReference type="InterPro" id="IPR049428">
    <property type="entry name" value="RecA-like_N"/>
</dbReference>
<dbReference type="InterPro" id="IPR020588">
    <property type="entry name" value="RecA_ATP-bd"/>
</dbReference>
<dbReference type="InterPro" id="IPR023400">
    <property type="entry name" value="RecA_C_sf"/>
</dbReference>
<dbReference type="InterPro" id="IPR020587">
    <property type="entry name" value="RecA_monomer-monomer_interface"/>
</dbReference>
<dbReference type="NCBIfam" id="TIGR02012">
    <property type="entry name" value="tigrfam_recA"/>
    <property type="match status" value="1"/>
</dbReference>
<dbReference type="PANTHER" id="PTHR45900:SF1">
    <property type="entry name" value="MITOCHONDRIAL DNA REPAIR PROTEIN RECA HOMOLOG-RELATED"/>
    <property type="match status" value="1"/>
</dbReference>
<dbReference type="PANTHER" id="PTHR45900">
    <property type="entry name" value="RECA"/>
    <property type="match status" value="1"/>
</dbReference>
<dbReference type="Pfam" id="PF00154">
    <property type="entry name" value="RecA"/>
    <property type="match status" value="1"/>
</dbReference>
<dbReference type="Pfam" id="PF21096">
    <property type="entry name" value="RecA_C"/>
    <property type="match status" value="1"/>
</dbReference>
<dbReference type="PRINTS" id="PR00142">
    <property type="entry name" value="RECA"/>
</dbReference>
<dbReference type="SMART" id="SM00382">
    <property type="entry name" value="AAA"/>
    <property type="match status" value="1"/>
</dbReference>
<dbReference type="SUPFAM" id="SSF52540">
    <property type="entry name" value="P-loop containing nucleoside triphosphate hydrolases"/>
    <property type="match status" value="1"/>
</dbReference>
<dbReference type="SUPFAM" id="SSF54752">
    <property type="entry name" value="RecA protein, C-terminal domain"/>
    <property type="match status" value="1"/>
</dbReference>
<dbReference type="PROSITE" id="PS00321">
    <property type="entry name" value="RECA_1"/>
    <property type="match status" value="1"/>
</dbReference>
<dbReference type="PROSITE" id="PS50162">
    <property type="entry name" value="RECA_2"/>
    <property type="match status" value="1"/>
</dbReference>
<dbReference type="PROSITE" id="PS50163">
    <property type="entry name" value="RECA_3"/>
    <property type="match status" value="1"/>
</dbReference>
<comment type="function">
    <text evidence="1">Can catalyze the hydrolysis of ATP in the presence of single-stranded DNA, the ATP-dependent uptake of single-stranded DNA by duplex DNA, and the ATP-dependent hybridization of homologous single-stranded DNAs. It interacts with LexA causing its activation and leading to its autocatalytic cleavage.</text>
</comment>
<comment type="subcellular location">
    <subcellularLocation>
        <location evidence="1">Cytoplasm</location>
    </subcellularLocation>
</comment>
<comment type="similarity">
    <text evidence="1">Belongs to the RecA family.</text>
</comment>